<dbReference type="EMBL" id="CP001014">
    <property type="protein sequence ID" value="ACB39624.1"/>
    <property type="molecule type" value="Genomic_DNA"/>
</dbReference>
<dbReference type="RefSeq" id="WP_012350044.1">
    <property type="nucleotide sequence ID" value="NC_010525.1"/>
</dbReference>
<dbReference type="SMR" id="B1YCW1"/>
<dbReference type="STRING" id="444157.Tneu_0685"/>
<dbReference type="GeneID" id="6166256"/>
<dbReference type="KEGG" id="tne:Tneu_0685"/>
<dbReference type="eggNOG" id="arCOG01043">
    <property type="taxonomic scope" value="Archaea"/>
</dbReference>
<dbReference type="HOGENOM" id="CLU_134829_1_0_2"/>
<dbReference type="OrthoDB" id="7819at2157"/>
<dbReference type="Proteomes" id="UP000001694">
    <property type="component" value="Chromosome"/>
</dbReference>
<dbReference type="Gene3D" id="3.30.1440.10">
    <property type="match status" value="1"/>
</dbReference>
<dbReference type="HAMAP" id="MF_01112">
    <property type="entry name" value="UPF0201"/>
    <property type="match status" value="1"/>
</dbReference>
<dbReference type="InterPro" id="IPR002739">
    <property type="entry name" value="PAB1135-like"/>
</dbReference>
<dbReference type="InterPro" id="IPR022803">
    <property type="entry name" value="Ribosomal_uL5_dom_sf"/>
</dbReference>
<dbReference type="PANTHER" id="PTHR39652">
    <property type="entry name" value="UPF0201 PROTEIN TK1335"/>
    <property type="match status" value="1"/>
</dbReference>
<dbReference type="PANTHER" id="PTHR39652:SF1">
    <property type="entry name" value="UPF0201 PROTEIN TK1335"/>
    <property type="match status" value="1"/>
</dbReference>
<dbReference type="Pfam" id="PF01877">
    <property type="entry name" value="RNA_binding"/>
    <property type="match status" value="1"/>
</dbReference>
<dbReference type="SUPFAM" id="SSF55282">
    <property type="entry name" value="RL5-like"/>
    <property type="match status" value="1"/>
</dbReference>
<organism>
    <name type="scientific">Pyrobaculum neutrophilum (strain DSM 2338 / JCM 9278 / NBRC 100436 / V24Sta)</name>
    <name type="common">Thermoproteus neutrophilus</name>
    <dbReference type="NCBI Taxonomy" id="444157"/>
    <lineage>
        <taxon>Archaea</taxon>
        <taxon>Thermoproteota</taxon>
        <taxon>Thermoprotei</taxon>
        <taxon>Thermoproteales</taxon>
        <taxon>Thermoproteaceae</taxon>
        <taxon>Pyrobaculum</taxon>
    </lineage>
</organism>
<gene>
    <name type="ordered locus">Tneu_0685</name>
</gene>
<sequence>MKVEAVVEVRYTEDKAKVLKALENVFTPKRVEERESDSGMLLVASCEGAGCLEKLRSAIWRQGIQDAARSVLSKGVVGEDTVVFSVNKQAAYVGVVSFVTEPGESPLGPITFTVKTNNVRQFLDWLAPRTYRGRVYYEAPPPD</sequence>
<accession>B1YCW1</accession>
<proteinExistence type="inferred from homology"/>
<evidence type="ECO:0000255" key="1">
    <source>
        <dbReference type="HAMAP-Rule" id="MF_01112"/>
    </source>
</evidence>
<feature type="chain" id="PRO_1000137121" description="UPF0201 protein Tneu_0685">
    <location>
        <begin position="1"/>
        <end position="143"/>
    </location>
</feature>
<protein>
    <recommendedName>
        <fullName evidence="1">UPF0201 protein Tneu_0685</fullName>
    </recommendedName>
</protein>
<name>Y685_PYRNV</name>
<reference key="1">
    <citation type="submission" date="2008-03" db="EMBL/GenBank/DDBJ databases">
        <title>Complete sequence of Thermoproteus neutrophilus V24Sta.</title>
        <authorList>
            <consortium name="US DOE Joint Genome Institute"/>
            <person name="Copeland A."/>
            <person name="Lucas S."/>
            <person name="Lapidus A."/>
            <person name="Glavina del Rio T."/>
            <person name="Dalin E."/>
            <person name="Tice H."/>
            <person name="Bruce D."/>
            <person name="Goodwin L."/>
            <person name="Pitluck S."/>
            <person name="Sims D."/>
            <person name="Brettin T."/>
            <person name="Detter J.C."/>
            <person name="Han C."/>
            <person name="Kuske C.R."/>
            <person name="Schmutz J."/>
            <person name="Larimer F."/>
            <person name="Land M."/>
            <person name="Hauser L."/>
            <person name="Kyrpides N."/>
            <person name="Mikhailova N."/>
            <person name="Biddle J.F."/>
            <person name="Zhang Z."/>
            <person name="Fitz-Gibbon S.T."/>
            <person name="Lowe T.M."/>
            <person name="Saltikov C."/>
            <person name="House C.H."/>
            <person name="Richardson P."/>
        </authorList>
    </citation>
    <scope>NUCLEOTIDE SEQUENCE [LARGE SCALE GENOMIC DNA]</scope>
    <source>
        <strain>DSM 2338 / JCM 9278 / NBRC 100436 / V24Sta</strain>
    </source>
</reference>
<comment type="similarity">
    <text evidence="1">Belongs to the UPF0201 family.</text>
</comment>